<reference key="1">
    <citation type="journal article" date="1990" name="J. Bacteriol.">
        <title>RcsB and RcsC: a two-component regulator of capsule synthesis in Escherichia coli.</title>
        <authorList>
            <person name="Stout V."/>
            <person name="Gottesman S."/>
        </authorList>
    </citation>
    <scope>NUCLEOTIDE SEQUENCE [GENOMIC DNA]</scope>
    <scope>INDUCTION</scope>
    <source>
        <strain>K12</strain>
    </source>
</reference>
<reference key="2">
    <citation type="journal article" date="1996" name="DNA Res.">
        <title>A 460-kb DNA sequence of the Escherichia coli K-12 genome corresponding to the 40.1-50.0 min region on the linkage map.</title>
        <authorList>
            <person name="Itoh T."/>
            <person name="Aiba H."/>
            <person name="Baba T."/>
            <person name="Fujita K."/>
            <person name="Hayashi K."/>
            <person name="Inada T."/>
            <person name="Isono K."/>
            <person name="Kasai H."/>
            <person name="Kimura S."/>
            <person name="Kitakawa M."/>
            <person name="Kitagawa M."/>
            <person name="Makino K."/>
            <person name="Miki T."/>
            <person name="Mizobuchi K."/>
            <person name="Mori H."/>
            <person name="Mori T."/>
            <person name="Motomura K."/>
            <person name="Nakade S."/>
            <person name="Nakamura Y."/>
            <person name="Nashimoto H."/>
            <person name="Nishio Y."/>
            <person name="Oshima T."/>
            <person name="Saito N."/>
            <person name="Sampei G."/>
            <person name="Seki Y."/>
            <person name="Sivasundaram S."/>
            <person name="Tagami H."/>
            <person name="Takeda J."/>
            <person name="Takemoto K."/>
            <person name="Wada C."/>
            <person name="Yamamoto Y."/>
            <person name="Horiuchi T."/>
        </authorList>
    </citation>
    <scope>NUCLEOTIDE SEQUENCE [LARGE SCALE GENOMIC DNA]</scope>
    <source>
        <strain>K12 / W3110 / ATCC 27325 / DSM 5911</strain>
    </source>
</reference>
<reference key="3">
    <citation type="journal article" date="1997" name="Science">
        <title>The complete genome sequence of Escherichia coli K-12.</title>
        <authorList>
            <person name="Blattner F.R."/>
            <person name="Plunkett G. III"/>
            <person name="Bloch C.A."/>
            <person name="Perna N.T."/>
            <person name="Burland V."/>
            <person name="Riley M."/>
            <person name="Collado-Vides J."/>
            <person name="Glasner J.D."/>
            <person name="Rode C.K."/>
            <person name="Mayhew G.F."/>
            <person name="Gregor J."/>
            <person name="Davis N.W."/>
            <person name="Kirkpatrick H.A."/>
            <person name="Goeden M.A."/>
            <person name="Rose D.J."/>
            <person name="Mau B."/>
            <person name="Shao Y."/>
        </authorList>
    </citation>
    <scope>NUCLEOTIDE SEQUENCE [LARGE SCALE GENOMIC DNA]</scope>
    <source>
        <strain>K12 / MG1655 / ATCC 47076</strain>
    </source>
</reference>
<reference key="4">
    <citation type="journal article" date="2006" name="Mol. Syst. Biol.">
        <title>Highly accurate genome sequences of Escherichia coli K-12 strains MG1655 and W3110.</title>
        <authorList>
            <person name="Hayashi K."/>
            <person name="Morooka N."/>
            <person name="Yamamoto Y."/>
            <person name="Fujita K."/>
            <person name="Isono K."/>
            <person name="Choi S."/>
            <person name="Ohtsubo E."/>
            <person name="Baba T."/>
            <person name="Wanner B.L."/>
            <person name="Mori H."/>
            <person name="Horiuchi T."/>
        </authorList>
    </citation>
    <scope>NUCLEOTIDE SEQUENCE [LARGE SCALE GENOMIC DNA]</scope>
    <source>
        <strain>K12 / W3110 / ATCC 27325 / DSM 5911</strain>
    </source>
</reference>
<reference key="5">
    <citation type="journal article" date="1992" name="J. Bacteriol.">
        <title>The rcsB gene, a positive regulator of colanic acid biosynthesis in Escherichia coli, is also an activator of ftsZ expression.</title>
        <authorList>
            <person name="Gervais F.G."/>
            <person name="Phoenix P."/>
            <person name="Drapeau G.R."/>
        </authorList>
    </citation>
    <scope>NUCLEOTIDE SEQUENCE [GENOMIC DNA] OF 4-9</scope>
    <scope>FUNCTION IN COLANIC ACID SYNTHESIS AND CELL DIVISION</scope>
    <source>
        <strain>K12</strain>
    </source>
</reference>
<reference key="6">
    <citation type="journal article" date="1991" name="J. Bacteriol.">
        <title>RcsA, an unstable positive regulator of capsular polysaccharide synthesis.</title>
        <authorList>
            <person name="Stout V."/>
            <person name="Torres-Cabassa A."/>
            <person name="Maurizi M.R."/>
            <person name="Gutnick D."/>
            <person name="Gottesman S."/>
        </authorList>
    </citation>
    <scope>INTERACTION WITH RCSA</scope>
</reference>
<reference key="7">
    <citation type="journal article" date="2000" name="J. Biol. Chem.">
        <title>The RcsAB box. Characterization of a new operator essential for the regulation of exopolysaccharide biosynthesis in enteric bacteria.</title>
        <authorList>
            <person name="Wehland M."/>
            <person name="Bernhard F."/>
        </authorList>
    </citation>
    <scope>FUNCTION</scope>
    <scope>INTERACTION WITH RCSA</scope>
    <scope>BINDING TO RCSAB BOX</scope>
</reference>
<reference key="8">
    <citation type="journal article" date="2001" name="Biosci. Biotechnol. Biochem.">
        <title>Characterization of the RcsC-&gt;YojN-&gt;RcsB phosphorelay signaling pathway involved in capsular synthesis in Escherichia coli.</title>
        <authorList>
            <person name="Chen M.H."/>
            <person name="Takeda S."/>
            <person name="Yamada H."/>
            <person name="Ishii Y."/>
            <person name="Yamashino T."/>
            <person name="Mizuno T."/>
        </authorList>
    </citation>
    <scope>PHOSPHORELAY</scope>
</reference>
<reference key="9">
    <citation type="journal article" date="2001" name="J. Bacteriol.">
        <title>Regulation of osmC gene expression by the two-component system rcsB-rcsC in Escherichia coli.</title>
        <authorList>
            <person name="Davalos-Garcia M."/>
            <person name="Conter A."/>
            <person name="Toesca I."/>
            <person name="Gutierrez C."/>
            <person name="Cam K."/>
        </authorList>
    </citation>
    <scope>FUNCTION</scope>
    <scope>SUBUNIT</scope>
</reference>
<reference key="10">
    <citation type="journal article" date="2001" name="Mol. Microbiol.">
        <title>A novel feature of the multistep phosphorelay in Escherichia coli: a revised model of the RcsC-&gt;YojN-&gt;RcsB signalling pathway implicated in capsular synthesis and swarming behaviour.</title>
        <authorList>
            <person name="Takeda S.-H."/>
            <person name="Fujisawa Y."/>
            <person name="Matsubara M."/>
            <person name="Aiba H."/>
            <person name="Mizuno T."/>
        </authorList>
    </citation>
    <scope>FUNCTION</scope>
    <scope>PHOSPHORYLATION</scope>
    <scope>PHOSPHORELAY</scope>
</reference>
<reference key="11">
    <citation type="journal article" date="2003" name="J. Bacteriol.">
        <title>Genome-wide analyses revealing a signaling network of the RcsC-YojN-RcsB phosphorelay system in Escherichia coli.</title>
        <authorList>
            <person name="Hagiwara D."/>
            <person name="Sugiura M."/>
            <person name="Oshima T."/>
            <person name="Mori H."/>
            <person name="Aiba H."/>
            <person name="Yamashino T."/>
            <person name="Mizuno T."/>
        </authorList>
    </citation>
    <scope>FUNCTION</scope>
    <scope>PHOSPHORELAY</scope>
    <source>
        <strain>K12 / ST001</strain>
    </source>
</reference>
<reference key="12">
    <citation type="journal article" date="2004" name="J. Mol. Biol.">
        <title>Solution structure of the Escherichia coli YojN histidine-phosphotransferase domain and its interaction with cognate phosphoryl receiver domains.</title>
        <authorList>
            <person name="Rogov V.V."/>
            <person name="Bernhard F."/>
            <person name="Loehr F."/>
            <person name="Doetsch V."/>
        </authorList>
    </citation>
    <scope>INTERACTION WITH RCSD</scope>
</reference>
<reference key="13">
    <citation type="journal article" date="2009" name="Genes Dev.">
        <title>The BLUF-EAL protein YcgF acts as a direct anti-repressor in a blue-light response of Escherichia coli.</title>
        <authorList>
            <person name="Tschowri N."/>
            <person name="Busse S."/>
            <person name="Hengge R."/>
        </authorList>
    </citation>
    <scope>ACTIVITY REGULATION</scope>
    <source>
        <strain>K12 / MC4100</strain>
    </source>
</reference>
<reference key="14">
    <citation type="journal article" date="2009" name="Mol. Cell">
        <title>Hydroxyurea induces hydroxyl radical-mediated cell death in Escherichia coli.</title>
        <authorList>
            <person name="Davies B.W."/>
            <person name="Kohanski M.A."/>
            <person name="Simmons L.A."/>
            <person name="Winkler J.A."/>
            <person name="Collins J.J."/>
            <person name="Walker G.C."/>
        </authorList>
    </citation>
    <scope>INDUCTION BY HYDROXYUREA</scope>
    <source>
        <strain>K12 / MC4100 / ATCC 35695 / DSM 6574</strain>
    </source>
</reference>
<reference key="15">
    <citation type="journal article" date="2010" name="J. Bacteriol.">
        <title>BglJ-RcsB heterodimers relieve repression of the Escherichia coli bgl operon by H-NS.</title>
        <authorList>
            <person name="Venkatesh G.R."/>
            <person name="Kembou Koungni F.C."/>
            <person name="Paukner A."/>
            <person name="Stratmann T."/>
            <person name="Blissenbach B."/>
            <person name="Schnetz K."/>
        </authorList>
    </citation>
    <scope>FUNCTION IN BGL DEREPRESSION</scope>
    <scope>ACTIVITY REGULATION</scope>
    <scope>INTERACTION WITH RCSA AND BGLJ</scope>
    <scope>MUTAGENESIS OF ASP-56</scope>
    <source>
        <strain>CSH50</strain>
    </source>
</reference>
<reference key="16">
    <citation type="journal article" date="2010" name="Nucleic Acids Res.">
        <title>Acid stress response in Escherichia coli: mechanism of regulation of gadA transcription by RcsB and GadE.</title>
        <authorList>
            <person name="Castanie-Cornet M.P."/>
            <person name="Cam K."/>
            <person name="Bastiat B."/>
            <person name="Cros A."/>
            <person name="Bordes P."/>
            <person name="Gutierrez C."/>
        </authorList>
    </citation>
    <scope>FUNCTION</scope>
    <scope>INTERACTION WITH GADE</scope>
    <scope>BINDING TO THE GAD BOX</scope>
</reference>
<dbReference type="EMBL" id="M28242">
    <property type="protein sequence ID" value="AAA24504.1"/>
    <property type="molecule type" value="Genomic_DNA"/>
</dbReference>
<dbReference type="EMBL" id="U00096">
    <property type="protein sequence ID" value="AAC75277.1"/>
    <property type="molecule type" value="Genomic_DNA"/>
</dbReference>
<dbReference type="EMBL" id="AP009048">
    <property type="protein sequence ID" value="BAA16000.1"/>
    <property type="molecule type" value="Genomic_DNA"/>
</dbReference>
<dbReference type="EMBL" id="S37760">
    <property type="protein sequence ID" value="AAB22290.1"/>
    <property type="molecule type" value="Genomic_DNA"/>
</dbReference>
<dbReference type="PIR" id="JV0068">
    <property type="entry name" value="BVECCB"/>
</dbReference>
<dbReference type="RefSeq" id="NP_416721.1">
    <property type="nucleotide sequence ID" value="NC_000913.3"/>
</dbReference>
<dbReference type="RefSeq" id="WP_001061917.1">
    <property type="nucleotide sequence ID" value="NZ_STEB01000002.1"/>
</dbReference>
<dbReference type="PDB" id="5I4C">
    <property type="method" value="X-ray"/>
    <property type="resolution" value="2.00 A"/>
    <property type="chains" value="A=1-147"/>
</dbReference>
<dbReference type="PDB" id="5VXN">
    <property type="method" value="X-ray"/>
    <property type="resolution" value="3.38 A"/>
    <property type="chains" value="A/B/C/D=1-216"/>
</dbReference>
<dbReference type="PDB" id="5W43">
    <property type="method" value="X-ray"/>
    <property type="resolution" value="3.15 A"/>
    <property type="chains" value="A/B=1-216"/>
</dbReference>
<dbReference type="PDBsum" id="5I4C"/>
<dbReference type="PDBsum" id="5VXN"/>
<dbReference type="PDBsum" id="5W43"/>
<dbReference type="SMR" id="P0DMC7"/>
<dbReference type="BioGRID" id="4260879">
    <property type="interactions" value="73"/>
</dbReference>
<dbReference type="BioGRID" id="851761">
    <property type="interactions" value="4"/>
</dbReference>
<dbReference type="ComplexPortal" id="CPX-5762">
    <property type="entry name" value="rcsAB DNA-binding transcription factor complex"/>
</dbReference>
<dbReference type="ComplexPortal" id="CPX-5763">
    <property type="entry name" value="bglJ-rcsB DNA-binding transcription factor complex"/>
</dbReference>
<dbReference type="ComplexPortal" id="CPX-5764">
    <property type="entry name" value="matA-rcsB DNA-binding transcription factor complex"/>
</dbReference>
<dbReference type="ComplexPortal" id="CPX-5765">
    <property type="entry name" value="rcsB DNA-binding transcription factor homodimer"/>
</dbReference>
<dbReference type="ComplexPortal" id="CPX-5781">
    <property type="entry name" value="gadE-rcsB DNA-binding transcription factor complex"/>
</dbReference>
<dbReference type="FunCoup" id="P0DMC7">
    <property type="interactions" value="395"/>
</dbReference>
<dbReference type="IntAct" id="P0DMC7">
    <property type="interactions" value="43"/>
</dbReference>
<dbReference type="STRING" id="511145.b2217"/>
<dbReference type="jPOST" id="P0DMC7"/>
<dbReference type="PaxDb" id="511145-b2217"/>
<dbReference type="EnsemblBacteria" id="AAC75277">
    <property type="protein sequence ID" value="AAC75277"/>
    <property type="gene ID" value="b2217"/>
</dbReference>
<dbReference type="GeneID" id="93774960"/>
<dbReference type="GeneID" id="947441"/>
<dbReference type="KEGG" id="ecj:JW2205"/>
<dbReference type="KEGG" id="eco:b2217"/>
<dbReference type="KEGG" id="ecoc:C3026_12395"/>
<dbReference type="PATRIC" id="fig|1411691.4.peg.18"/>
<dbReference type="EchoBASE" id="EB0814"/>
<dbReference type="eggNOG" id="COG2197">
    <property type="taxonomic scope" value="Bacteria"/>
</dbReference>
<dbReference type="HOGENOM" id="CLU_000445_90_1_6"/>
<dbReference type="InParanoid" id="P0DMC7"/>
<dbReference type="OMA" id="IEWVNIV"/>
<dbReference type="OrthoDB" id="4313922at2"/>
<dbReference type="PhylomeDB" id="P0DMC7"/>
<dbReference type="BioCyc" id="EcoCyc:RCSB-MONOMER"/>
<dbReference type="PRO" id="PR:P0DMC7"/>
<dbReference type="Proteomes" id="UP000000625">
    <property type="component" value="Chromosome"/>
</dbReference>
<dbReference type="GO" id="GO:0005829">
    <property type="term" value="C:cytosol"/>
    <property type="evidence" value="ECO:0000314"/>
    <property type="project" value="EcoCyc"/>
</dbReference>
<dbReference type="GO" id="GO:0005667">
    <property type="term" value="C:transcription regulator complex"/>
    <property type="evidence" value="ECO:0000353"/>
    <property type="project" value="ComplexPortal"/>
</dbReference>
<dbReference type="GO" id="GO:0003677">
    <property type="term" value="F:DNA binding"/>
    <property type="evidence" value="ECO:0007669"/>
    <property type="project" value="UniProtKB-UniRule"/>
</dbReference>
<dbReference type="GO" id="GO:0001216">
    <property type="term" value="F:DNA-binding transcription activator activity"/>
    <property type="evidence" value="ECO:0000314"/>
    <property type="project" value="EcoCyc"/>
</dbReference>
<dbReference type="GO" id="GO:0001217">
    <property type="term" value="F:DNA-binding transcription repressor activity"/>
    <property type="evidence" value="ECO:0000314"/>
    <property type="project" value="EcoCyc"/>
</dbReference>
<dbReference type="GO" id="GO:0042802">
    <property type="term" value="F:identical protein binding"/>
    <property type="evidence" value="ECO:0000353"/>
    <property type="project" value="IntAct"/>
</dbReference>
<dbReference type="GO" id="GO:1990451">
    <property type="term" value="P:cellular stress response to acidic pH"/>
    <property type="evidence" value="ECO:0000314"/>
    <property type="project" value="ComplexPortal"/>
</dbReference>
<dbReference type="GO" id="GO:0006351">
    <property type="term" value="P:DNA-templated transcription"/>
    <property type="evidence" value="ECO:0000314"/>
    <property type="project" value="EcoCyc"/>
</dbReference>
<dbReference type="GO" id="GO:0045892">
    <property type="term" value="P:negative regulation of DNA-templated transcription"/>
    <property type="evidence" value="ECO:0000315"/>
    <property type="project" value="EcoCyc"/>
</dbReference>
<dbReference type="GO" id="GO:0000160">
    <property type="term" value="P:phosphorelay signal transduction system"/>
    <property type="evidence" value="ECO:0007669"/>
    <property type="project" value="UniProtKB-UniRule"/>
</dbReference>
<dbReference type="GO" id="GO:0031346">
    <property type="term" value="P:positive regulation of cell projection organization"/>
    <property type="evidence" value="ECO:0000315"/>
    <property type="project" value="CACAO"/>
</dbReference>
<dbReference type="GO" id="GO:0045893">
    <property type="term" value="P:positive regulation of DNA-templated transcription"/>
    <property type="evidence" value="ECO:0000314"/>
    <property type="project" value="ComplexPortal"/>
</dbReference>
<dbReference type="GO" id="GO:1902021">
    <property type="term" value="P:regulation of bacterial-type flagellum-dependent cell motility"/>
    <property type="evidence" value="ECO:0000303"/>
    <property type="project" value="ComplexPortal"/>
</dbReference>
<dbReference type="GO" id="GO:1901913">
    <property type="term" value="P:regulation of capsule organization"/>
    <property type="evidence" value="ECO:0000314"/>
    <property type="project" value="ComplexPortal"/>
</dbReference>
<dbReference type="GO" id="GO:0043470">
    <property type="term" value="P:regulation of carbohydrate catabolic process"/>
    <property type="evidence" value="ECO:0000314"/>
    <property type="project" value="ComplexPortal"/>
</dbReference>
<dbReference type="GO" id="GO:0006355">
    <property type="term" value="P:regulation of DNA-templated transcription"/>
    <property type="evidence" value="ECO:0000314"/>
    <property type="project" value="ComplexPortal"/>
</dbReference>
<dbReference type="GO" id="GO:0046677">
    <property type="term" value="P:response to antibiotic"/>
    <property type="evidence" value="ECO:0000315"/>
    <property type="project" value="CACAO"/>
</dbReference>
<dbReference type="GO" id="GO:0044011">
    <property type="term" value="P:single-species biofilm formation on inanimate substrate"/>
    <property type="evidence" value="ECO:0000315"/>
    <property type="project" value="CACAO"/>
</dbReference>
<dbReference type="CDD" id="cd06170">
    <property type="entry name" value="LuxR_C_like"/>
    <property type="match status" value="1"/>
</dbReference>
<dbReference type="CDD" id="cd17535">
    <property type="entry name" value="REC_NarL-like"/>
    <property type="match status" value="1"/>
</dbReference>
<dbReference type="FunFam" id="1.10.10.10:FF:000072">
    <property type="entry name" value="Transcriptional regulatory protein RcsB"/>
    <property type="match status" value="1"/>
</dbReference>
<dbReference type="FunFam" id="3.40.50.2300:FF:000023">
    <property type="entry name" value="Transcriptional regulatory protein RcsB"/>
    <property type="match status" value="1"/>
</dbReference>
<dbReference type="Gene3D" id="3.40.50.2300">
    <property type="match status" value="1"/>
</dbReference>
<dbReference type="Gene3D" id="1.10.10.10">
    <property type="entry name" value="Winged helix-like DNA-binding domain superfamily/Winged helix DNA-binding domain"/>
    <property type="match status" value="1"/>
</dbReference>
<dbReference type="HAMAP" id="MF_00981">
    <property type="entry name" value="RcsB"/>
    <property type="match status" value="1"/>
</dbReference>
<dbReference type="InterPro" id="IPR011006">
    <property type="entry name" value="CheY-like_superfamily"/>
</dbReference>
<dbReference type="InterPro" id="IPR030864">
    <property type="entry name" value="RcsB"/>
</dbReference>
<dbReference type="InterPro" id="IPR016032">
    <property type="entry name" value="Sig_transdc_resp-reg_C-effctor"/>
</dbReference>
<dbReference type="InterPro" id="IPR001789">
    <property type="entry name" value="Sig_transdc_resp-reg_receiver"/>
</dbReference>
<dbReference type="InterPro" id="IPR000792">
    <property type="entry name" value="Tscrpt_reg_LuxR_C"/>
</dbReference>
<dbReference type="InterPro" id="IPR039420">
    <property type="entry name" value="WalR-like"/>
</dbReference>
<dbReference type="InterPro" id="IPR036388">
    <property type="entry name" value="WH-like_DNA-bd_sf"/>
</dbReference>
<dbReference type="NCBIfam" id="NF008098">
    <property type="entry name" value="PRK10840.1"/>
    <property type="match status" value="1"/>
</dbReference>
<dbReference type="PANTHER" id="PTHR43214:SF17">
    <property type="entry name" value="TRANSCRIPTIONAL REGULATORY PROTEIN RCSB"/>
    <property type="match status" value="1"/>
</dbReference>
<dbReference type="PANTHER" id="PTHR43214">
    <property type="entry name" value="TWO-COMPONENT RESPONSE REGULATOR"/>
    <property type="match status" value="1"/>
</dbReference>
<dbReference type="Pfam" id="PF00196">
    <property type="entry name" value="GerE"/>
    <property type="match status" value="1"/>
</dbReference>
<dbReference type="Pfam" id="PF00072">
    <property type="entry name" value="Response_reg"/>
    <property type="match status" value="1"/>
</dbReference>
<dbReference type="PRINTS" id="PR00038">
    <property type="entry name" value="HTHLUXR"/>
</dbReference>
<dbReference type="SMART" id="SM00421">
    <property type="entry name" value="HTH_LUXR"/>
    <property type="match status" value="1"/>
</dbReference>
<dbReference type="SMART" id="SM00448">
    <property type="entry name" value="REC"/>
    <property type="match status" value="1"/>
</dbReference>
<dbReference type="SUPFAM" id="SSF46894">
    <property type="entry name" value="C-terminal effector domain of the bipartite response regulators"/>
    <property type="match status" value="1"/>
</dbReference>
<dbReference type="SUPFAM" id="SSF52172">
    <property type="entry name" value="CheY-like"/>
    <property type="match status" value="1"/>
</dbReference>
<dbReference type="PROSITE" id="PS00622">
    <property type="entry name" value="HTH_LUXR_1"/>
    <property type="match status" value="1"/>
</dbReference>
<dbReference type="PROSITE" id="PS50043">
    <property type="entry name" value="HTH_LUXR_2"/>
    <property type="match status" value="1"/>
</dbReference>
<dbReference type="PROSITE" id="PS50110">
    <property type="entry name" value="RESPONSE_REGULATORY"/>
    <property type="match status" value="1"/>
</dbReference>
<evidence type="ECO:0000255" key="1">
    <source>
        <dbReference type="HAMAP-Rule" id="MF_00981"/>
    </source>
</evidence>
<evidence type="ECO:0000255" key="2">
    <source>
        <dbReference type="PROSITE-ProRule" id="PRU00169"/>
    </source>
</evidence>
<evidence type="ECO:0000269" key="3">
    <source>
    </source>
</evidence>
<evidence type="ECO:0000269" key="4">
    <source>
    </source>
</evidence>
<evidence type="ECO:0000269" key="5">
    <source>
    </source>
</evidence>
<evidence type="ECO:0000269" key="6">
    <source>
    </source>
</evidence>
<evidence type="ECO:0000269" key="7">
    <source>
    </source>
</evidence>
<evidence type="ECO:0000269" key="8">
    <source>
    </source>
</evidence>
<evidence type="ECO:0000269" key="9">
    <source>
    </source>
</evidence>
<evidence type="ECO:0000269" key="10">
    <source>
    </source>
</evidence>
<evidence type="ECO:0000269" key="11">
    <source>
    </source>
</evidence>
<evidence type="ECO:0000269" key="12">
    <source>
    </source>
</evidence>
<evidence type="ECO:0000269" key="13">
    <source>
    </source>
</evidence>
<evidence type="ECO:0000269" key="14">
    <source>
    </source>
</evidence>
<evidence type="ECO:0000305" key="15">
    <source>
    </source>
</evidence>
<evidence type="ECO:0000305" key="16">
    <source>
    </source>
</evidence>
<evidence type="ECO:0007829" key="17">
    <source>
        <dbReference type="PDB" id="5I4C"/>
    </source>
</evidence>
<evidence type="ECO:0007829" key="18">
    <source>
        <dbReference type="PDB" id="5W43"/>
    </source>
</evidence>
<comment type="function">
    <text evidence="1 3 4 5 6 8 12 13">Component of the Rcs signaling system, which controls transcription of numerous genes. RcsB is the response regulator that binds to regulatory DNA regions. Can function both in an RcsA-dependent or RcsA-independent manner. The system regulates expression of numerous genes, including genes involved in colanic acid capsule synthesis, biofilm formation, cell division and outer membrane proteins synthesis. Also involved, with GadE, in control of glutamate-dependent acid resistance, and, with BglJ, in derepression of the cryptic bgl operon. The RcsB-BglJ activity is probably independent of RcsB phosphorylation.</text>
</comment>
<comment type="activity regulation">
    <text evidence="9 13">Activity is modulated by phosphorylation and interaction with other transcriptional regulators. Probably up-regulated by YmgA/AriR, and possibly down-regulated by YcgZ, all 3 are connector proteins providing additional signal input into the signaling system.</text>
</comment>
<comment type="subunit">
    <text evidence="1 3 5 7 10 12 13">Interacts with RcsD and RcsA. Homodimer. Can form an heterodimer with the coactivator RcsA, which binds to the RcsAB boxes to promote transcription of RcsA-dependent genes. Can also form a heterodimer with GadE to bind to the GAD box, and with BglJ to bind to the bgl promoter.</text>
</comment>
<comment type="interaction">
    <interactant intactId="EBI-369670">
        <id>P0DMC7</id>
    </interactant>
    <interactant intactId="EBI-551429">
        <id>P39404</id>
        <label>bglJ</label>
    </interactant>
    <organismsDiffer>false</organismsDiffer>
    <experiments>4</experiments>
</comment>
<comment type="interaction">
    <interactant intactId="EBI-369670">
        <id>P0DMC7</id>
    </interactant>
    <interactant intactId="EBI-562540">
        <id>P37195</id>
        <label>dctR</label>
    </interactant>
    <organismsDiffer>false</organismsDiffer>
    <experiments>3</experiments>
</comment>
<comment type="interaction">
    <interactant intactId="EBI-369670">
        <id>P0DMC7</id>
    </interactant>
    <interactant intactId="EBI-369670">
        <id>P0DMC7</id>
        <label>rcsB</label>
    </interactant>
    <organismsDiffer>false</organismsDiffer>
    <experiments>3</experiments>
</comment>
<comment type="interaction">
    <interactant intactId="EBI-369670">
        <id>P0DMC7</id>
    </interactant>
    <interactant intactId="EBI-556803">
        <id>P39838</id>
        <label>rcsD</label>
    </interactant>
    <organismsDiffer>false</organismsDiffer>
    <experiments>5</experiments>
</comment>
<comment type="induction">
    <text evidence="11 14">Expression is dependent on the alternate sigma factor, RpoN (PubMed:2404948). Repressed by hydroxyurea.</text>
</comment>
<comment type="PTM">
    <text evidence="15">Phosphorylated and activated by RcsD.</text>
</comment>
<comment type="miscellaneous">
    <text evidence="16">There is a close linkage between the Rcs and PhoQ/P signaling systems, and both signaling systems respond to certain external divalent cations (zinc and magnesium).</text>
</comment>
<comment type="similarity">
    <text evidence="1">Belongs to the RcsB family.</text>
</comment>
<sequence length="216" mass="23671">MNNMNVIIADDHPIVLFGIRKSLEQIEWVNVVGEFEDSTALINNLPKLDAHVLITDLSMPGDKYGDGITLIKYIKRHFPSLSIIVLTMNNNPAILSAVLDLDIEGIVLKQGAPTDLPKALAALQKGKKFTPESVSRLLEKISAGGYGDKRLSPKESEVLRLFAEGFLVTEIAKKLNRSIKTISSQKKSAMMKLGVENDIALLNYLSSVTLSPADKD</sequence>
<keyword id="KW-0002">3D-structure</keyword>
<keyword id="KW-0010">Activator</keyword>
<keyword id="KW-0972">Capsule biogenesis/degradation</keyword>
<keyword id="KW-0238">DNA-binding</keyword>
<keyword id="KW-0597">Phosphoprotein</keyword>
<keyword id="KW-1185">Reference proteome</keyword>
<keyword id="KW-0804">Transcription</keyword>
<keyword id="KW-0805">Transcription regulation</keyword>
<keyword id="KW-0902">Two-component regulatory system</keyword>
<protein>
    <recommendedName>
        <fullName evidence="1">Transcriptional regulatory protein RcsB</fullName>
    </recommendedName>
    <alternativeName>
        <fullName>Capsular synthesis regulator component B</fullName>
    </alternativeName>
</protein>
<gene>
    <name evidence="1" type="primary">rcsB</name>
    <name type="ordered locus">b2217</name>
    <name type="ordered locus">JW2205</name>
</gene>
<feature type="chain" id="PRO_0000081209" description="Transcriptional regulatory protein RcsB">
    <location>
        <begin position="1"/>
        <end position="216"/>
    </location>
</feature>
<feature type="domain" description="Response regulatory" evidence="2">
    <location>
        <begin position="5"/>
        <end position="124"/>
    </location>
</feature>
<feature type="domain" description="HTH luxR-type" evidence="1">
    <location>
        <begin position="144"/>
        <end position="209"/>
    </location>
</feature>
<feature type="DNA-binding region" description="H-T-H motif" evidence="1">
    <location>
        <begin position="168"/>
        <end position="187"/>
    </location>
</feature>
<feature type="modified residue" description="4-aspartylphosphate" evidence="1">
    <location>
        <position position="56"/>
    </location>
</feature>
<feature type="mutagenesis site" description="Increases heterodimer formation with RcsA. Does not affect heterodimer formation with BglJ." evidence="13">
    <original>D</original>
    <variation>E</variation>
    <location>
        <position position="56"/>
    </location>
</feature>
<feature type="mutagenesis site" description="Decreases heterodimer formation with RcsA. Does not affect heterodimer formation with BglJ." evidence="13">
    <original>D</original>
    <variation>N</variation>
    <location>
        <position position="56"/>
    </location>
</feature>
<feature type="strand" evidence="17">
    <location>
        <begin position="4"/>
        <end position="9"/>
    </location>
</feature>
<feature type="helix" evidence="17">
    <location>
        <begin position="13"/>
        <end position="23"/>
    </location>
</feature>
<feature type="strand" evidence="17">
    <location>
        <begin position="29"/>
        <end position="37"/>
    </location>
</feature>
<feature type="helix" evidence="17">
    <location>
        <begin position="38"/>
        <end position="44"/>
    </location>
</feature>
<feature type="helix" evidence="17">
    <location>
        <begin position="45"/>
        <end position="47"/>
    </location>
</feature>
<feature type="strand" evidence="17">
    <location>
        <begin position="51"/>
        <end position="57"/>
    </location>
</feature>
<feature type="turn" evidence="17">
    <location>
        <begin position="62"/>
        <end position="64"/>
    </location>
</feature>
<feature type="helix" evidence="17">
    <location>
        <begin position="67"/>
        <end position="77"/>
    </location>
</feature>
<feature type="strand" evidence="17">
    <location>
        <begin position="82"/>
        <end position="89"/>
    </location>
</feature>
<feature type="helix" evidence="17">
    <location>
        <begin position="92"/>
        <end position="99"/>
    </location>
</feature>
<feature type="turn" evidence="17">
    <location>
        <begin position="100"/>
        <end position="102"/>
    </location>
</feature>
<feature type="strand" evidence="17">
    <location>
        <begin position="104"/>
        <end position="108"/>
    </location>
</feature>
<feature type="helix" evidence="17">
    <location>
        <begin position="109"/>
        <end position="111"/>
    </location>
</feature>
<feature type="helix" evidence="17">
    <location>
        <begin position="112"/>
        <end position="124"/>
    </location>
</feature>
<feature type="helix" evidence="18">
    <location>
        <begin position="132"/>
        <end position="138"/>
    </location>
</feature>
<feature type="helix" evidence="18">
    <location>
        <begin position="153"/>
        <end position="162"/>
    </location>
</feature>
<feature type="turn" evidence="18">
    <location>
        <begin position="163"/>
        <end position="165"/>
    </location>
</feature>
<feature type="helix" evidence="18">
    <location>
        <begin position="168"/>
        <end position="174"/>
    </location>
</feature>
<feature type="helix" evidence="18">
    <location>
        <begin position="179"/>
        <end position="192"/>
    </location>
</feature>
<feature type="helix" evidence="18">
    <location>
        <begin position="198"/>
        <end position="207"/>
    </location>
</feature>
<name>RCSB_ECOLI</name>
<accession>P0DMC7</accession>
<accession>P14374</accession>
<accession>P69407</accession>
<organism>
    <name type="scientific">Escherichia coli (strain K12)</name>
    <dbReference type="NCBI Taxonomy" id="83333"/>
    <lineage>
        <taxon>Bacteria</taxon>
        <taxon>Pseudomonadati</taxon>
        <taxon>Pseudomonadota</taxon>
        <taxon>Gammaproteobacteria</taxon>
        <taxon>Enterobacterales</taxon>
        <taxon>Enterobacteriaceae</taxon>
        <taxon>Escherichia</taxon>
    </lineage>
</organism>
<proteinExistence type="evidence at protein level"/>